<dbReference type="EMBL" id="AB219572">
    <property type="protein sequence ID" value="BAE72677.1"/>
    <property type="molecule type" value="mRNA"/>
</dbReference>
<dbReference type="EMBL" id="EF672727">
    <property type="protein sequence ID" value="ABS83011.1"/>
    <property type="molecule type" value="mRNA"/>
</dbReference>
<dbReference type="EMBL" id="EF192051">
    <property type="protein sequence ID" value="ABM92338.1"/>
    <property type="molecule type" value="mRNA"/>
</dbReference>
<dbReference type="EMBL" id="BC169643">
    <property type="protein sequence ID" value="AAI69643.1"/>
    <property type="molecule type" value="mRNA"/>
</dbReference>
<dbReference type="SMR" id="Q2PG84"/>
<dbReference type="KEGG" id="xla:734174"/>
<dbReference type="AGR" id="Xenbase:XB-GENE-1018276"/>
<dbReference type="CTD" id="734174"/>
<dbReference type="Xenbase" id="XB-GENE-1018276">
    <property type="gene designation" value="sox1.S"/>
</dbReference>
<dbReference type="OrthoDB" id="6247875at2759"/>
<dbReference type="Proteomes" id="UP000186698">
    <property type="component" value="Chromosome 2S"/>
</dbReference>
<dbReference type="Bgee" id="734174">
    <property type="expression patterns" value="Expressed in brain and 5 other cell types or tissues"/>
</dbReference>
<dbReference type="GO" id="GO:0005634">
    <property type="term" value="C:nucleus"/>
    <property type="evidence" value="ECO:0000250"/>
    <property type="project" value="UniProtKB"/>
</dbReference>
<dbReference type="GO" id="GO:0001228">
    <property type="term" value="F:DNA-binding transcription activator activity, RNA polymerase II-specific"/>
    <property type="evidence" value="ECO:0000318"/>
    <property type="project" value="GO_Central"/>
</dbReference>
<dbReference type="GO" id="GO:0000978">
    <property type="term" value="F:RNA polymerase II cis-regulatory region sequence-specific DNA binding"/>
    <property type="evidence" value="ECO:0000318"/>
    <property type="project" value="GO_Central"/>
</dbReference>
<dbReference type="GO" id="GO:0007420">
    <property type="term" value="P:brain development"/>
    <property type="evidence" value="ECO:0000318"/>
    <property type="project" value="GO_Central"/>
</dbReference>
<dbReference type="GO" id="GO:0000122">
    <property type="term" value="P:negative regulation of transcription by RNA polymerase II"/>
    <property type="evidence" value="ECO:0000318"/>
    <property type="project" value="GO_Central"/>
</dbReference>
<dbReference type="GO" id="GO:0007399">
    <property type="term" value="P:nervous system development"/>
    <property type="evidence" value="ECO:0000315"/>
    <property type="project" value="UniProtKB"/>
</dbReference>
<dbReference type="GO" id="GO:0030182">
    <property type="term" value="P:neuron differentiation"/>
    <property type="evidence" value="ECO:0000318"/>
    <property type="project" value="GO_Central"/>
</dbReference>
<dbReference type="GO" id="GO:0045944">
    <property type="term" value="P:positive regulation of transcription by RNA polymerase II"/>
    <property type="evidence" value="ECO:0000318"/>
    <property type="project" value="GO_Central"/>
</dbReference>
<dbReference type="CDD" id="cd01388">
    <property type="entry name" value="HMG-box_SoxB"/>
    <property type="match status" value="1"/>
</dbReference>
<dbReference type="FunFam" id="1.10.30.10:FF:000002">
    <property type="entry name" value="transcription factor Sox-2"/>
    <property type="match status" value="1"/>
</dbReference>
<dbReference type="Gene3D" id="1.10.30.10">
    <property type="entry name" value="High mobility group box domain"/>
    <property type="match status" value="1"/>
</dbReference>
<dbReference type="InterPro" id="IPR009071">
    <property type="entry name" value="HMG_box_dom"/>
</dbReference>
<dbReference type="InterPro" id="IPR036910">
    <property type="entry name" value="HMG_box_dom_sf"/>
</dbReference>
<dbReference type="InterPro" id="IPR022097">
    <property type="entry name" value="SOX_fam"/>
</dbReference>
<dbReference type="InterPro" id="IPR050140">
    <property type="entry name" value="SRY-related_HMG-box_TF-like"/>
</dbReference>
<dbReference type="PANTHER" id="PTHR10270">
    <property type="entry name" value="SOX TRANSCRIPTION FACTOR"/>
    <property type="match status" value="1"/>
</dbReference>
<dbReference type="PANTHER" id="PTHR10270:SF328">
    <property type="entry name" value="TRANSCRIPTION FACTOR SOX-1"/>
    <property type="match status" value="1"/>
</dbReference>
<dbReference type="Pfam" id="PF00505">
    <property type="entry name" value="HMG_box"/>
    <property type="match status" value="1"/>
</dbReference>
<dbReference type="Pfam" id="PF12336">
    <property type="entry name" value="SOXp"/>
    <property type="match status" value="1"/>
</dbReference>
<dbReference type="SMART" id="SM00398">
    <property type="entry name" value="HMG"/>
    <property type="match status" value="1"/>
</dbReference>
<dbReference type="SUPFAM" id="SSF47095">
    <property type="entry name" value="HMG-box"/>
    <property type="match status" value="1"/>
</dbReference>
<dbReference type="PROSITE" id="PS50118">
    <property type="entry name" value="HMG_BOX_2"/>
    <property type="match status" value="1"/>
</dbReference>
<protein>
    <recommendedName>
        <fullName evidence="3">Transcription factor Sox-1</fullName>
        <shortName evidence="8">XlSox1</shortName>
        <shortName evidence="9">xSox1</shortName>
    </recommendedName>
    <alternativeName>
        <fullName>SRY (sex determining region Y)-box 1</fullName>
    </alternativeName>
</protein>
<sequence>MYSMMMETDLHSPGVQPPNNTGQGGGNKASQDRVKRPMNAFMVWSRGQRRKMAQENPKMHNSEISKRLGAEWKVMSEAEKRPFIDEAKRLRALHMKEHPDYKYRPRRKTKTLLKKDKYSLAGGLLHAAGGGHMGVGLSPGGGGGGCGGAGGMVVQRMESPGSGASTGGYAHMNGWANGAYPGSVAAAAAAAMMQEAQLAYSQQQQQHPGSGGHHPHHHPHHPHHHPHHHPHHNPTSHPTPPQPMHRYDMSALQYSPLPGAQTYMSASPSSYGALSYSSSQQQHQGSPSSAAVAAAAAAASSGALGVLGSLVKSEPSVSPPVSGGGSHNRPPCPGDLREMISMYLPGGGEAGDPAAAAAAAAAAAAATSRLHSLPQHYQGTGTGITSTMPLTHI</sequence>
<name>SOX1_XENLA</name>
<evidence type="ECO:0000250" key="1">
    <source>
        <dbReference type="UniProtKB" id="P41225"/>
    </source>
</evidence>
<evidence type="ECO:0000250" key="2">
    <source>
        <dbReference type="UniProtKB" id="P48430"/>
    </source>
</evidence>
<evidence type="ECO:0000250" key="3">
    <source>
        <dbReference type="UniProtKB" id="Q6DGL6"/>
    </source>
</evidence>
<evidence type="ECO:0000255" key="4">
    <source>
        <dbReference type="PROSITE-ProRule" id="PRU00267"/>
    </source>
</evidence>
<evidence type="ECO:0000256" key="5">
    <source>
        <dbReference type="SAM" id="MobiDB-lite"/>
    </source>
</evidence>
<evidence type="ECO:0000269" key="6">
    <source>
    </source>
</evidence>
<evidence type="ECO:0000269" key="7">
    <source ref="2"/>
</evidence>
<evidence type="ECO:0000303" key="8">
    <source>
    </source>
</evidence>
<evidence type="ECO:0000303" key="9">
    <source ref="2"/>
</evidence>
<evidence type="ECO:0000305" key="10"/>
<evidence type="ECO:0000312" key="11">
    <source>
        <dbReference type="EMBL" id="AAI69643.1"/>
    </source>
</evidence>
<evidence type="ECO:0000312" key="12">
    <source>
        <dbReference type="EMBL" id="ABM92338.1"/>
    </source>
</evidence>
<evidence type="ECO:0000312" key="13">
    <source>
        <dbReference type="EMBL" id="ABS83011.1"/>
    </source>
</evidence>
<evidence type="ECO:0000312" key="14">
    <source>
        <dbReference type="EMBL" id="BAE72677.1"/>
    </source>
</evidence>
<organism>
    <name type="scientific">Xenopus laevis</name>
    <name type="common">African clawed frog</name>
    <dbReference type="NCBI Taxonomy" id="8355"/>
    <lineage>
        <taxon>Eukaryota</taxon>
        <taxon>Metazoa</taxon>
        <taxon>Chordata</taxon>
        <taxon>Craniata</taxon>
        <taxon>Vertebrata</taxon>
        <taxon>Euteleostomi</taxon>
        <taxon>Amphibia</taxon>
        <taxon>Batrachia</taxon>
        <taxon>Anura</taxon>
        <taxon>Pipoidea</taxon>
        <taxon>Pipidae</taxon>
        <taxon>Xenopodinae</taxon>
        <taxon>Xenopus</taxon>
        <taxon>Xenopus</taxon>
    </lineage>
</organism>
<gene>
    <name evidence="14" type="primary">sox1</name>
</gene>
<reference evidence="10 14" key="1">
    <citation type="journal article" date="2006" name="Biochem. Biophys. Res. Commun.">
        <title>Expression of Sox1 during Xenopus early embryogenesis.</title>
        <authorList>
            <person name="Nitta K.R."/>
            <person name="Takahashi S."/>
            <person name="Haramoto Y."/>
            <person name="Fukuda M."/>
            <person name="Onuma Y."/>
            <person name="Asashima M."/>
        </authorList>
    </citation>
    <scope>NUCLEOTIDE SEQUENCE [MRNA]</scope>
    <scope>FUNCTION</scope>
    <scope>TISSUE SPECIFICITY</scope>
    <scope>DEVELOPMENTAL STAGE</scope>
    <scope>INDUCTION</scope>
    <source>
        <tissue evidence="6">Tail bud</tissue>
    </source>
</reference>
<reference evidence="10 13" key="2">
    <citation type="journal article" date="2007" name="Dong Wu Xue Yan Jiu">
        <title>Temporal and spatial expression patterns of Sox1 gene in Xenopus laevis embryo.</title>
        <authorList>
            <person name="Ma L."/>
            <person name="Zhao S.-H."/>
            <person name="Kong Q.-H."/>
            <person name="Mao B.-Y."/>
        </authorList>
    </citation>
    <scope>NUCLEOTIDE SEQUENCE [MRNA]</scope>
    <scope>TISSUE SPECIFICITY</scope>
    <scope>DEVELOPMENTAL STAGE</scope>
    <source>
        <tissue evidence="7">Embryonic head</tissue>
    </source>
</reference>
<reference evidence="12" key="3">
    <citation type="submission" date="2006-12" db="EMBL/GenBank/DDBJ databases">
        <title>Sox3 acts through multiple regulatory targets to suppress Nodal signaling during Xenopus germ-layer specification.</title>
        <authorList>
            <person name="Zhang C."/>
            <person name="Grammer T.C."/>
            <person name="Basta T."/>
            <person name="Tai P."/>
            <person name="Espinosa J.M."/>
            <person name="Klymkowsky M.W."/>
        </authorList>
    </citation>
    <scope>NUCLEOTIDE SEQUENCE [MRNA]</scope>
</reference>
<reference evidence="12" key="4">
    <citation type="submission" date="2008-11" db="EMBL/GenBank/DDBJ databases">
        <authorList>
            <consortium name="NIH - Xenopus Gene Collection (XGC) project"/>
        </authorList>
    </citation>
    <scope>NUCLEOTIDE SEQUENCE [LARGE SCALE MRNA]</scope>
    <source>
        <tissue evidence="11">Gastrula</tissue>
    </source>
</reference>
<proteinExistence type="evidence at transcript level"/>
<keyword id="KW-0010">Activator</keyword>
<keyword id="KW-0217">Developmental protein</keyword>
<keyword id="KW-0238">DNA-binding</keyword>
<keyword id="KW-0539">Nucleus</keyword>
<keyword id="KW-1185">Reference proteome</keyword>
<keyword id="KW-0804">Transcription</keyword>
<keyword id="KW-0805">Transcription regulation</keyword>
<accession>Q2PG84</accession>
<accession>A2TED2</accession>
<feature type="chain" id="PRO_0000378063" description="Transcription factor Sox-1">
    <location>
        <begin position="1"/>
        <end position="393"/>
    </location>
</feature>
<feature type="DNA-binding region" description="HMG box" evidence="4">
    <location>
        <begin position="34"/>
        <end position="102"/>
    </location>
</feature>
<feature type="region of interest" description="Disordered" evidence="5">
    <location>
        <begin position="1"/>
        <end position="34"/>
    </location>
</feature>
<feature type="region of interest" description="Disordered" evidence="5">
    <location>
        <begin position="197"/>
        <end position="247"/>
    </location>
</feature>
<feature type="region of interest" description="Disordered" evidence="5">
    <location>
        <begin position="315"/>
        <end position="334"/>
    </location>
</feature>
<feature type="region of interest" description="Disordered" evidence="5">
    <location>
        <begin position="374"/>
        <end position="393"/>
    </location>
</feature>
<feature type="short sequence motif" description="9aaTAD" evidence="1">
    <location>
        <begin position="338"/>
        <end position="346"/>
    </location>
</feature>
<feature type="compositionally biased region" description="Low complexity" evidence="5">
    <location>
        <begin position="197"/>
        <end position="208"/>
    </location>
</feature>
<feature type="compositionally biased region" description="Basic residues" evidence="5">
    <location>
        <begin position="213"/>
        <end position="234"/>
    </location>
</feature>
<feature type="compositionally biased region" description="Polar residues" evidence="5">
    <location>
        <begin position="375"/>
        <end position="393"/>
    </location>
</feature>
<feature type="sequence conflict" description="In Ref. 2; ABM92338." evidence="10" ref="2">
    <original>A</original>
    <variation>AAA</variation>
    <location>
        <position position="366"/>
    </location>
</feature>
<comment type="function">
    <text evidence="3 6">Transcriptional activator (By similarity). Participates in neural induction.</text>
</comment>
<comment type="subcellular location">
    <subcellularLocation>
        <location evidence="2 4">Nucleus</location>
    </subcellularLocation>
</comment>
<comment type="tissue specificity">
    <text evidence="6 7">Expressed in the animal hemisphere at early cleavage stages and in the presumptive ectoderm in the late blastula embryo. At gastrula stage (stage 10.5), expressed weakly in the anterior ectoderm distant from the blastopore. At neural plate stages (stage 13), expression appears in the anterior neural plate. At neural fold stage (stage 20), strongly expressed in the anterior of the neural tube. At stages 23 and 25, expression increases in the presumptive brain and appears in the optic vesicle. At tail bud stages, strongly expressed in the brain, eye and weakly in the spinal cord. In the tail bud brain, strongly expressed in the dorsal region. In the eye, expressed in strong in the dorsal roof of the brain vesicles.</text>
</comment>
<comment type="developmental stage">
    <text evidence="6 7">Expressed both maternally and zygotically. Expressed in unfertilized eggs and at blastula stages. Expression remains relatively high until late gastrula stage (stage 11) but becomes weaker at early neurula stages (stages 12 to 15). Expressed strongly at stages 18, 20 and 30.</text>
</comment>
<comment type="induction">
    <text evidence="6">By bmp-antagonism.</text>
</comment>
<comment type="domain">
    <text evidence="1">The 9aaTAD motif is a transactivation domain present in a large number of yeast and animal transcription factors.</text>
</comment>
<comment type="caution">
    <text evidence="10">Unlike Ref.2, PubMed:17056008 doesn't detect maternal expression.</text>
</comment>